<evidence type="ECO:0000250" key="1"/>
<evidence type="ECO:0000255" key="2">
    <source>
        <dbReference type="PROSITE-ProRule" id="PRU00147"/>
    </source>
</evidence>
<evidence type="ECO:0000256" key="3">
    <source>
        <dbReference type="SAM" id="MobiDB-lite"/>
    </source>
</evidence>
<evidence type="ECO:0000269" key="4">
    <source>
    </source>
</evidence>
<evidence type="ECO:0000269" key="5">
    <source>
    </source>
</evidence>
<evidence type="ECO:0007744" key="6">
    <source>
    </source>
</evidence>
<evidence type="ECO:0007744" key="7">
    <source>
    </source>
</evidence>
<evidence type="ECO:0007744" key="8">
    <source>
    </source>
</evidence>
<evidence type="ECO:0007744" key="9">
    <source>
    </source>
</evidence>
<evidence type="ECO:0007744" key="10">
    <source>
    </source>
</evidence>
<evidence type="ECO:0007744" key="11">
    <source>
    </source>
</evidence>
<evidence type="ECO:0007744" key="12">
    <source>
    </source>
</evidence>
<keyword id="KW-0007">Acetylation</keyword>
<keyword id="KW-0597">Phosphoprotein</keyword>
<keyword id="KW-1267">Proteomics identification</keyword>
<keyword id="KW-1185">Reference proteome</keyword>
<gene>
    <name type="primary">HS1BP3</name>
</gene>
<sequence length="392" mass="42780">MQSPAVLVTSRRLQNAHTGLDLTVPQHQEVRGKMMSGHVEYQILVVTRLAAFKSAKHRPEDVVQFLVSKKYSEIEEFYQKLSSRYAAASLPPLPRKVLFVGESDIRERRAVFNEILRCVSKDAELAGSPELLEFLGTRSPGAAGLTSRDSSVLDGTDSQTGNDEEAFDFFEEQDQVAEEGPPVQSLKGEDAEESLEEEEALDPLGIMRSKKPKKHPKVAVKAKPSPRLTIFDEEVDPDEGLFGPGRKLSPQDPSEDVSSVDPLKLFDDPDLGGAIPLGDSLLLPAACESGGPTPSLSHRDASKELFRVEEDLDQILNLGAEPKPKPQLKPKPPVAAKPVIPRKPAVPPKAGPAEAVAGQQKPQEQIQAMDEMDILQYIQDHDTPAQAAPSLF</sequence>
<feature type="chain" id="PRO_0000313802" description="HCLS1-binding protein 3">
    <location>
        <begin position="1"/>
        <end position="392"/>
    </location>
</feature>
<feature type="domain" description="PX" evidence="2">
    <location>
        <begin position="19"/>
        <end position="142"/>
    </location>
</feature>
<feature type="region of interest" description="Disordered" evidence="3">
    <location>
        <begin position="138"/>
        <end position="162"/>
    </location>
</feature>
<feature type="region of interest" description="Disordered" evidence="3">
    <location>
        <begin position="174"/>
        <end position="265"/>
    </location>
</feature>
<feature type="region of interest" description="Disordered" evidence="3">
    <location>
        <begin position="319"/>
        <end position="364"/>
    </location>
</feature>
<feature type="compositionally biased region" description="Acidic residues" evidence="3">
    <location>
        <begin position="190"/>
        <end position="201"/>
    </location>
</feature>
<feature type="compositionally biased region" description="Basic residues" evidence="3">
    <location>
        <begin position="208"/>
        <end position="220"/>
    </location>
</feature>
<feature type="compositionally biased region" description="Pro residues" evidence="3">
    <location>
        <begin position="325"/>
        <end position="335"/>
    </location>
</feature>
<feature type="modified residue" description="N-acetylmethionine" evidence="8 10">
    <location>
        <position position="1"/>
    </location>
</feature>
<feature type="modified residue" description="Phosphoserine" evidence="8 11">
    <location>
        <position position="3"/>
    </location>
</feature>
<feature type="modified residue" description="Phosphoserine" evidence="6 11 12">
    <location>
        <position position="139"/>
    </location>
</feature>
<feature type="modified residue" description="Phosphoserine" evidence="8 9 11">
    <location>
        <position position="194"/>
    </location>
</feature>
<feature type="modified residue" description="Phosphoserine" evidence="12">
    <location>
        <position position="249"/>
    </location>
</feature>
<feature type="modified residue" description="N6-acetyllysine" evidence="7">
    <location>
        <position position="337"/>
    </location>
</feature>
<feature type="sequence variant" id="VAR_037741" description="In dbSNP:rs2305458." evidence="4 5">
    <original>V</original>
    <variation>M</variation>
    <location>
        <position position="260"/>
    </location>
</feature>
<feature type="sequence variant" id="VAR_037742" description="In dbSNP:rs35589938.">
    <original>G</original>
    <variation>R</variation>
    <location>
        <position position="273"/>
    </location>
</feature>
<feature type="sequence variant" id="VAR_037743" description="In dbSNP:rs35579164.">
    <original>P</original>
    <variation>R</variation>
    <location>
        <position position="348"/>
    </location>
</feature>
<feature type="sequence variant" id="VAR_037744" description="In dbSNP:rs3732149." evidence="5">
    <original>A</original>
    <variation>T</variation>
    <location>
        <position position="388"/>
    </location>
</feature>
<name>H1BP3_HUMAN</name>
<organism>
    <name type="scientific">Homo sapiens</name>
    <name type="common">Human</name>
    <dbReference type="NCBI Taxonomy" id="9606"/>
    <lineage>
        <taxon>Eukaryota</taxon>
        <taxon>Metazoa</taxon>
        <taxon>Chordata</taxon>
        <taxon>Craniata</taxon>
        <taxon>Vertebrata</taxon>
        <taxon>Euteleostomi</taxon>
        <taxon>Mammalia</taxon>
        <taxon>Eutheria</taxon>
        <taxon>Euarchontoglires</taxon>
        <taxon>Primates</taxon>
        <taxon>Haplorrhini</taxon>
        <taxon>Catarrhini</taxon>
        <taxon>Hominidae</taxon>
        <taxon>Homo</taxon>
    </lineage>
</organism>
<proteinExistence type="evidence at protein level"/>
<accession>Q53T59</accession>
<accession>B2RAW2</accession>
<accession>D6W529</accession>
<accession>Q86VC2</accession>
<accession>Q8N367</accession>
<protein>
    <recommendedName>
        <fullName>HCLS1-binding protein 3</fullName>
    </recommendedName>
    <alternativeName>
        <fullName>HS1-binding protein 3</fullName>
        <shortName>HSP1BP-3</shortName>
    </alternativeName>
</protein>
<comment type="function">
    <text evidence="1">May be a modulator of IL-2 signaling.</text>
</comment>
<comment type="subunit">
    <text evidence="1">Binds HCLS1. Interacts with the SH3 domain of HCLS1 in vitro (By similarity).</text>
</comment>
<comment type="interaction">
    <interactant intactId="EBI-11335623">
        <id>Q53T59</id>
    </interactant>
    <interactant intactId="EBI-348399">
        <id>P22607</id>
        <label>FGFR3</label>
    </interactant>
    <organismsDiffer>false</organismsDiffer>
    <experiments>3</experiments>
</comment>
<comment type="interaction">
    <interactant intactId="EBI-11335623">
        <id>Q53T59</id>
    </interactant>
    <interactant intactId="EBI-351506">
        <id>P06396</id>
        <label>GSN</label>
    </interactant>
    <organismsDiffer>false</organismsDiffer>
    <experiments>3</experiments>
</comment>
<comment type="interaction">
    <interactant intactId="EBI-11335623">
        <id>Q53T59</id>
    </interactant>
    <interactant intactId="EBI-50433196">
        <id>A0A6Q8PF08</id>
        <label>PMP22</label>
    </interactant>
    <organismsDiffer>false</organismsDiffer>
    <experiments>3</experiments>
</comment>
<comment type="interaction">
    <interactant intactId="EBI-11335623">
        <id>Q53T59</id>
    </interactant>
    <interactant intactId="EBI-5235340">
        <id>Q7Z699</id>
        <label>SPRED1</label>
    </interactant>
    <organismsDiffer>false</organismsDiffer>
    <experiments>3</experiments>
</comment>
<reference key="1">
    <citation type="journal article" date="2004" name="Nat. Genet.">
        <title>Complete sequencing and characterization of 21,243 full-length human cDNAs.</title>
        <authorList>
            <person name="Ota T."/>
            <person name="Suzuki Y."/>
            <person name="Nishikawa T."/>
            <person name="Otsuki T."/>
            <person name="Sugiyama T."/>
            <person name="Irie R."/>
            <person name="Wakamatsu A."/>
            <person name="Hayashi K."/>
            <person name="Sato H."/>
            <person name="Nagai K."/>
            <person name="Kimura K."/>
            <person name="Makita H."/>
            <person name="Sekine M."/>
            <person name="Obayashi M."/>
            <person name="Nishi T."/>
            <person name="Shibahara T."/>
            <person name="Tanaka T."/>
            <person name="Ishii S."/>
            <person name="Yamamoto J."/>
            <person name="Saito K."/>
            <person name="Kawai Y."/>
            <person name="Isono Y."/>
            <person name="Nakamura Y."/>
            <person name="Nagahari K."/>
            <person name="Murakami K."/>
            <person name="Yasuda T."/>
            <person name="Iwayanagi T."/>
            <person name="Wagatsuma M."/>
            <person name="Shiratori A."/>
            <person name="Sudo H."/>
            <person name="Hosoiri T."/>
            <person name="Kaku Y."/>
            <person name="Kodaira H."/>
            <person name="Kondo H."/>
            <person name="Sugawara M."/>
            <person name="Takahashi M."/>
            <person name="Kanda K."/>
            <person name="Yokoi T."/>
            <person name="Furuya T."/>
            <person name="Kikkawa E."/>
            <person name="Omura Y."/>
            <person name="Abe K."/>
            <person name="Kamihara K."/>
            <person name="Katsuta N."/>
            <person name="Sato K."/>
            <person name="Tanikawa M."/>
            <person name="Yamazaki M."/>
            <person name="Ninomiya K."/>
            <person name="Ishibashi T."/>
            <person name="Yamashita H."/>
            <person name="Murakawa K."/>
            <person name="Fujimori K."/>
            <person name="Tanai H."/>
            <person name="Kimata M."/>
            <person name="Watanabe M."/>
            <person name="Hiraoka S."/>
            <person name="Chiba Y."/>
            <person name="Ishida S."/>
            <person name="Ono Y."/>
            <person name="Takiguchi S."/>
            <person name="Watanabe S."/>
            <person name="Yosida M."/>
            <person name="Hotuta T."/>
            <person name="Kusano J."/>
            <person name="Kanehori K."/>
            <person name="Takahashi-Fujii A."/>
            <person name="Hara H."/>
            <person name="Tanase T.-O."/>
            <person name="Nomura Y."/>
            <person name="Togiya S."/>
            <person name="Komai F."/>
            <person name="Hara R."/>
            <person name="Takeuchi K."/>
            <person name="Arita M."/>
            <person name="Imose N."/>
            <person name="Musashino K."/>
            <person name="Yuuki H."/>
            <person name="Oshima A."/>
            <person name="Sasaki N."/>
            <person name="Aotsuka S."/>
            <person name="Yoshikawa Y."/>
            <person name="Matsunawa H."/>
            <person name="Ichihara T."/>
            <person name="Shiohata N."/>
            <person name="Sano S."/>
            <person name="Moriya S."/>
            <person name="Momiyama H."/>
            <person name="Satoh N."/>
            <person name="Takami S."/>
            <person name="Terashima Y."/>
            <person name="Suzuki O."/>
            <person name="Nakagawa S."/>
            <person name="Senoh A."/>
            <person name="Mizoguchi H."/>
            <person name="Goto Y."/>
            <person name="Shimizu F."/>
            <person name="Wakebe H."/>
            <person name="Hishigaki H."/>
            <person name="Watanabe T."/>
            <person name="Sugiyama A."/>
            <person name="Takemoto M."/>
            <person name="Kawakami B."/>
            <person name="Yamazaki M."/>
            <person name="Watanabe K."/>
            <person name="Kumagai A."/>
            <person name="Itakura S."/>
            <person name="Fukuzumi Y."/>
            <person name="Fujimori Y."/>
            <person name="Komiyama M."/>
            <person name="Tashiro H."/>
            <person name="Tanigami A."/>
            <person name="Fujiwara T."/>
            <person name="Ono T."/>
            <person name="Yamada K."/>
            <person name="Fujii Y."/>
            <person name="Ozaki K."/>
            <person name="Hirao M."/>
            <person name="Ohmori Y."/>
            <person name="Kawabata A."/>
            <person name="Hikiji T."/>
            <person name="Kobatake N."/>
            <person name="Inagaki H."/>
            <person name="Ikema Y."/>
            <person name="Okamoto S."/>
            <person name="Okitani R."/>
            <person name="Kawakami T."/>
            <person name="Noguchi S."/>
            <person name="Itoh T."/>
            <person name="Shigeta K."/>
            <person name="Senba T."/>
            <person name="Matsumura K."/>
            <person name="Nakajima Y."/>
            <person name="Mizuno T."/>
            <person name="Morinaga M."/>
            <person name="Sasaki M."/>
            <person name="Togashi T."/>
            <person name="Oyama M."/>
            <person name="Hata H."/>
            <person name="Watanabe M."/>
            <person name="Komatsu T."/>
            <person name="Mizushima-Sugano J."/>
            <person name="Satoh T."/>
            <person name="Shirai Y."/>
            <person name="Takahashi Y."/>
            <person name="Nakagawa K."/>
            <person name="Okumura K."/>
            <person name="Nagase T."/>
            <person name="Nomura N."/>
            <person name="Kikuchi H."/>
            <person name="Masuho Y."/>
            <person name="Yamashita R."/>
            <person name="Nakai K."/>
            <person name="Yada T."/>
            <person name="Nakamura Y."/>
            <person name="Ohara O."/>
            <person name="Isogai T."/>
            <person name="Sugano S."/>
        </authorList>
    </citation>
    <scope>NUCLEOTIDE SEQUENCE [LARGE SCALE MRNA]</scope>
    <scope>VARIANT MET-260</scope>
    <source>
        <tissue>Uterus</tissue>
    </source>
</reference>
<reference key="2">
    <citation type="journal article" date="2005" name="Nature">
        <title>Generation and annotation of the DNA sequences of human chromosomes 2 and 4.</title>
        <authorList>
            <person name="Hillier L.W."/>
            <person name="Graves T.A."/>
            <person name="Fulton R.S."/>
            <person name="Fulton L.A."/>
            <person name="Pepin K.H."/>
            <person name="Minx P."/>
            <person name="Wagner-McPherson C."/>
            <person name="Layman D."/>
            <person name="Wylie K."/>
            <person name="Sekhon M."/>
            <person name="Becker M.C."/>
            <person name="Fewell G.A."/>
            <person name="Delehaunty K.D."/>
            <person name="Miner T.L."/>
            <person name="Nash W.E."/>
            <person name="Kremitzki C."/>
            <person name="Oddy L."/>
            <person name="Du H."/>
            <person name="Sun H."/>
            <person name="Bradshaw-Cordum H."/>
            <person name="Ali J."/>
            <person name="Carter J."/>
            <person name="Cordes M."/>
            <person name="Harris A."/>
            <person name="Isak A."/>
            <person name="van Brunt A."/>
            <person name="Nguyen C."/>
            <person name="Du F."/>
            <person name="Courtney L."/>
            <person name="Kalicki J."/>
            <person name="Ozersky P."/>
            <person name="Abbott S."/>
            <person name="Armstrong J."/>
            <person name="Belter E.A."/>
            <person name="Caruso L."/>
            <person name="Cedroni M."/>
            <person name="Cotton M."/>
            <person name="Davidson T."/>
            <person name="Desai A."/>
            <person name="Elliott G."/>
            <person name="Erb T."/>
            <person name="Fronick C."/>
            <person name="Gaige T."/>
            <person name="Haakenson W."/>
            <person name="Haglund K."/>
            <person name="Holmes A."/>
            <person name="Harkins R."/>
            <person name="Kim K."/>
            <person name="Kruchowski S.S."/>
            <person name="Strong C.M."/>
            <person name="Grewal N."/>
            <person name="Goyea E."/>
            <person name="Hou S."/>
            <person name="Levy A."/>
            <person name="Martinka S."/>
            <person name="Mead K."/>
            <person name="McLellan M.D."/>
            <person name="Meyer R."/>
            <person name="Randall-Maher J."/>
            <person name="Tomlinson C."/>
            <person name="Dauphin-Kohlberg S."/>
            <person name="Kozlowicz-Reilly A."/>
            <person name="Shah N."/>
            <person name="Swearengen-Shahid S."/>
            <person name="Snider J."/>
            <person name="Strong J.T."/>
            <person name="Thompson J."/>
            <person name="Yoakum M."/>
            <person name="Leonard S."/>
            <person name="Pearman C."/>
            <person name="Trani L."/>
            <person name="Radionenko M."/>
            <person name="Waligorski J.E."/>
            <person name="Wang C."/>
            <person name="Rock S.M."/>
            <person name="Tin-Wollam A.-M."/>
            <person name="Maupin R."/>
            <person name="Latreille P."/>
            <person name="Wendl M.C."/>
            <person name="Yang S.-P."/>
            <person name="Pohl C."/>
            <person name="Wallis J.W."/>
            <person name="Spieth J."/>
            <person name="Bieri T.A."/>
            <person name="Berkowicz N."/>
            <person name="Nelson J.O."/>
            <person name="Osborne J."/>
            <person name="Ding L."/>
            <person name="Meyer R."/>
            <person name="Sabo A."/>
            <person name="Shotland Y."/>
            <person name="Sinha P."/>
            <person name="Wohldmann P.E."/>
            <person name="Cook L.L."/>
            <person name="Hickenbotham M.T."/>
            <person name="Eldred J."/>
            <person name="Williams D."/>
            <person name="Jones T.A."/>
            <person name="She X."/>
            <person name="Ciccarelli F.D."/>
            <person name="Izaurralde E."/>
            <person name="Taylor J."/>
            <person name="Schmutz J."/>
            <person name="Myers R.M."/>
            <person name="Cox D.R."/>
            <person name="Huang X."/>
            <person name="McPherson J.D."/>
            <person name="Mardis E.R."/>
            <person name="Clifton S.W."/>
            <person name="Warren W.C."/>
            <person name="Chinwalla A.T."/>
            <person name="Eddy S.R."/>
            <person name="Marra M.A."/>
            <person name="Ovcharenko I."/>
            <person name="Furey T.S."/>
            <person name="Miller W."/>
            <person name="Eichler E.E."/>
            <person name="Bork P."/>
            <person name="Suyama M."/>
            <person name="Torrents D."/>
            <person name="Waterston R.H."/>
            <person name="Wilson R.K."/>
        </authorList>
    </citation>
    <scope>NUCLEOTIDE SEQUENCE [LARGE SCALE GENOMIC DNA]</scope>
</reference>
<reference key="3">
    <citation type="submission" date="2005-09" db="EMBL/GenBank/DDBJ databases">
        <authorList>
            <person name="Mural R.J."/>
            <person name="Istrail S."/>
            <person name="Sutton G.G."/>
            <person name="Florea L."/>
            <person name="Halpern A.L."/>
            <person name="Mobarry C.M."/>
            <person name="Lippert R."/>
            <person name="Walenz B."/>
            <person name="Shatkay H."/>
            <person name="Dew I."/>
            <person name="Miller J.R."/>
            <person name="Flanigan M.J."/>
            <person name="Edwards N.J."/>
            <person name="Bolanos R."/>
            <person name="Fasulo D."/>
            <person name="Halldorsson B.V."/>
            <person name="Hannenhalli S."/>
            <person name="Turner R."/>
            <person name="Yooseph S."/>
            <person name="Lu F."/>
            <person name="Nusskern D.R."/>
            <person name="Shue B.C."/>
            <person name="Zheng X.H."/>
            <person name="Zhong F."/>
            <person name="Delcher A.L."/>
            <person name="Huson D.H."/>
            <person name="Kravitz S.A."/>
            <person name="Mouchard L."/>
            <person name="Reinert K."/>
            <person name="Remington K.A."/>
            <person name="Clark A.G."/>
            <person name="Waterman M.S."/>
            <person name="Eichler E.E."/>
            <person name="Adams M.D."/>
            <person name="Hunkapiller M.W."/>
            <person name="Myers E.W."/>
            <person name="Venter J.C."/>
        </authorList>
    </citation>
    <scope>NUCLEOTIDE SEQUENCE [LARGE SCALE GENOMIC DNA]</scope>
</reference>
<reference key="4">
    <citation type="journal article" date="2004" name="Genome Res.">
        <title>The status, quality, and expansion of the NIH full-length cDNA project: the Mammalian Gene Collection (MGC).</title>
        <authorList>
            <consortium name="The MGC Project Team"/>
        </authorList>
    </citation>
    <scope>NUCLEOTIDE SEQUENCE [LARGE SCALE MRNA]</scope>
    <scope>VARIANTS MET-260 AND THR-388</scope>
    <source>
        <tissue>Brain</tissue>
    </source>
</reference>
<reference key="5">
    <citation type="journal article" date="2006" name="Nat. Biotechnol.">
        <title>A probability-based approach for high-throughput protein phosphorylation analysis and site localization.</title>
        <authorList>
            <person name="Beausoleil S.A."/>
            <person name="Villen J."/>
            <person name="Gerber S.A."/>
            <person name="Rush J."/>
            <person name="Gygi S.P."/>
        </authorList>
    </citation>
    <scope>PHOSPHORYLATION [LARGE SCALE ANALYSIS] AT SER-139</scope>
    <scope>IDENTIFICATION BY MASS SPECTROMETRY [LARGE SCALE ANALYSIS]</scope>
    <source>
        <tissue>Cervix carcinoma</tissue>
    </source>
</reference>
<reference key="6">
    <citation type="journal article" date="2008" name="Proc. Natl. Acad. Sci. U.S.A.">
        <title>A quantitative atlas of mitotic phosphorylation.</title>
        <authorList>
            <person name="Dephoure N."/>
            <person name="Zhou C."/>
            <person name="Villen J."/>
            <person name="Beausoleil S.A."/>
            <person name="Bakalarski C.E."/>
            <person name="Elledge S.J."/>
            <person name="Gygi S.P."/>
        </authorList>
    </citation>
    <scope>IDENTIFICATION BY MASS SPECTROMETRY [LARGE SCALE ANALYSIS]</scope>
    <source>
        <tissue>Cervix carcinoma</tissue>
    </source>
</reference>
<reference key="7">
    <citation type="journal article" date="2009" name="Science">
        <title>Lysine acetylation targets protein complexes and co-regulates major cellular functions.</title>
        <authorList>
            <person name="Choudhary C."/>
            <person name="Kumar C."/>
            <person name="Gnad F."/>
            <person name="Nielsen M.L."/>
            <person name="Rehman M."/>
            <person name="Walther T.C."/>
            <person name="Olsen J.V."/>
            <person name="Mann M."/>
        </authorList>
    </citation>
    <scope>ACETYLATION [LARGE SCALE ANALYSIS] AT LYS-337</scope>
    <scope>IDENTIFICATION BY MASS SPECTROMETRY [LARGE SCALE ANALYSIS]</scope>
</reference>
<reference key="8">
    <citation type="journal article" date="2010" name="Sci. Signal.">
        <title>Quantitative phosphoproteomics reveals widespread full phosphorylation site occupancy during mitosis.</title>
        <authorList>
            <person name="Olsen J.V."/>
            <person name="Vermeulen M."/>
            <person name="Santamaria A."/>
            <person name="Kumar C."/>
            <person name="Miller M.L."/>
            <person name="Jensen L.J."/>
            <person name="Gnad F."/>
            <person name="Cox J."/>
            <person name="Jensen T.S."/>
            <person name="Nigg E.A."/>
            <person name="Brunak S."/>
            <person name="Mann M."/>
        </authorList>
    </citation>
    <scope>ACETYLATION [LARGE SCALE ANALYSIS] AT MET-1</scope>
    <scope>PHOSPHORYLATION [LARGE SCALE ANALYSIS] AT SER-3 AND SER-194</scope>
    <scope>IDENTIFICATION BY MASS SPECTROMETRY [LARGE SCALE ANALYSIS]</scope>
    <source>
        <tissue>Cervix carcinoma</tissue>
    </source>
</reference>
<reference key="9">
    <citation type="journal article" date="2011" name="BMC Syst. Biol.">
        <title>Initial characterization of the human central proteome.</title>
        <authorList>
            <person name="Burkard T.R."/>
            <person name="Planyavsky M."/>
            <person name="Kaupe I."/>
            <person name="Breitwieser F.P."/>
            <person name="Buerckstuemmer T."/>
            <person name="Bennett K.L."/>
            <person name="Superti-Furga G."/>
            <person name="Colinge J."/>
        </authorList>
    </citation>
    <scope>IDENTIFICATION BY MASS SPECTROMETRY [LARGE SCALE ANALYSIS]</scope>
</reference>
<reference key="10">
    <citation type="journal article" date="2011" name="Sci. Signal.">
        <title>System-wide temporal characterization of the proteome and phosphoproteome of human embryonic stem cell differentiation.</title>
        <authorList>
            <person name="Rigbolt K.T."/>
            <person name="Prokhorova T.A."/>
            <person name="Akimov V."/>
            <person name="Henningsen J."/>
            <person name="Johansen P.T."/>
            <person name="Kratchmarova I."/>
            <person name="Kassem M."/>
            <person name="Mann M."/>
            <person name="Olsen J.V."/>
            <person name="Blagoev B."/>
        </authorList>
    </citation>
    <scope>PHOSPHORYLATION [LARGE SCALE ANALYSIS] AT SER-194</scope>
    <scope>IDENTIFICATION BY MASS SPECTROMETRY [LARGE SCALE ANALYSIS]</scope>
</reference>
<reference key="11">
    <citation type="journal article" date="2012" name="Proc. Natl. Acad. Sci. U.S.A.">
        <title>N-terminal acetylome analyses and functional insights of the N-terminal acetyltransferase NatB.</title>
        <authorList>
            <person name="Van Damme P."/>
            <person name="Lasa M."/>
            <person name="Polevoda B."/>
            <person name="Gazquez C."/>
            <person name="Elosegui-Artola A."/>
            <person name="Kim D.S."/>
            <person name="De Juan-Pardo E."/>
            <person name="Demeyer K."/>
            <person name="Hole K."/>
            <person name="Larrea E."/>
            <person name="Timmerman E."/>
            <person name="Prieto J."/>
            <person name="Arnesen T."/>
            <person name="Sherman F."/>
            <person name="Gevaert K."/>
            <person name="Aldabe R."/>
        </authorList>
    </citation>
    <scope>ACETYLATION [LARGE SCALE ANALYSIS] AT MET-1</scope>
    <scope>IDENTIFICATION BY MASS SPECTROMETRY [LARGE SCALE ANALYSIS]</scope>
</reference>
<reference key="12">
    <citation type="journal article" date="2013" name="J. Proteome Res.">
        <title>Toward a comprehensive characterization of a human cancer cell phosphoproteome.</title>
        <authorList>
            <person name="Zhou H."/>
            <person name="Di Palma S."/>
            <person name="Preisinger C."/>
            <person name="Peng M."/>
            <person name="Polat A.N."/>
            <person name="Heck A.J."/>
            <person name="Mohammed S."/>
        </authorList>
    </citation>
    <scope>PHOSPHORYLATION [LARGE SCALE ANALYSIS] AT SER-3; SER-139 AND SER-194</scope>
    <scope>IDENTIFICATION BY MASS SPECTROMETRY [LARGE SCALE ANALYSIS]</scope>
    <source>
        <tissue>Cervix carcinoma</tissue>
        <tissue>Erythroleukemia</tissue>
    </source>
</reference>
<reference key="13">
    <citation type="journal article" date="2014" name="J. Proteomics">
        <title>An enzyme assisted RP-RPLC approach for in-depth analysis of human liver phosphoproteome.</title>
        <authorList>
            <person name="Bian Y."/>
            <person name="Song C."/>
            <person name="Cheng K."/>
            <person name="Dong M."/>
            <person name="Wang F."/>
            <person name="Huang J."/>
            <person name="Sun D."/>
            <person name="Wang L."/>
            <person name="Ye M."/>
            <person name="Zou H."/>
        </authorList>
    </citation>
    <scope>PHOSPHORYLATION [LARGE SCALE ANALYSIS] AT SER-139 AND SER-249</scope>
    <scope>IDENTIFICATION BY MASS SPECTROMETRY [LARGE SCALE ANALYSIS]</scope>
    <source>
        <tissue>Liver</tissue>
    </source>
</reference>
<dbReference type="EMBL" id="AK314383">
    <property type="protein sequence ID" value="BAG37009.1"/>
    <property type="molecule type" value="mRNA"/>
</dbReference>
<dbReference type="EMBL" id="AC012065">
    <property type="protein sequence ID" value="AAX93235.1"/>
    <property type="molecule type" value="Genomic_DNA"/>
</dbReference>
<dbReference type="EMBL" id="CH471053">
    <property type="protein sequence ID" value="EAX00814.1"/>
    <property type="molecule type" value="Genomic_DNA"/>
</dbReference>
<dbReference type="EMBL" id="CH471053">
    <property type="protein sequence ID" value="EAX00816.1"/>
    <property type="molecule type" value="Genomic_DNA"/>
</dbReference>
<dbReference type="EMBL" id="BC050636">
    <property type="protein sequence ID" value="AAH50636.1"/>
    <property type="molecule type" value="mRNA"/>
</dbReference>
<dbReference type="CCDS" id="CCDS1700.1"/>
<dbReference type="RefSeq" id="NP_071905.3">
    <property type="nucleotide sequence ID" value="NM_022460.3"/>
</dbReference>
<dbReference type="SMR" id="Q53T59"/>
<dbReference type="BioGRID" id="122141">
    <property type="interactions" value="51"/>
</dbReference>
<dbReference type="FunCoup" id="Q53T59">
    <property type="interactions" value="1040"/>
</dbReference>
<dbReference type="IntAct" id="Q53T59">
    <property type="interactions" value="37"/>
</dbReference>
<dbReference type="STRING" id="9606.ENSP00000305193"/>
<dbReference type="GlyGen" id="Q53T59">
    <property type="glycosylation" value="2 sites, 1 O-linked glycan (1 site)"/>
</dbReference>
<dbReference type="iPTMnet" id="Q53T59"/>
<dbReference type="PhosphoSitePlus" id="Q53T59"/>
<dbReference type="BioMuta" id="HS1BP3"/>
<dbReference type="DMDM" id="74726842"/>
<dbReference type="jPOST" id="Q53T59"/>
<dbReference type="MassIVE" id="Q53T59"/>
<dbReference type="PaxDb" id="9606-ENSP00000305193"/>
<dbReference type="PeptideAtlas" id="Q53T59"/>
<dbReference type="ProteomicsDB" id="62542"/>
<dbReference type="Pumba" id="Q53T59"/>
<dbReference type="Antibodypedia" id="27299">
    <property type="antibodies" value="159 antibodies from 27 providers"/>
</dbReference>
<dbReference type="DNASU" id="64342"/>
<dbReference type="Ensembl" id="ENST00000304031.8">
    <property type="protein sequence ID" value="ENSP00000305193.3"/>
    <property type="gene ID" value="ENSG00000118960.13"/>
</dbReference>
<dbReference type="GeneID" id="64342"/>
<dbReference type="KEGG" id="hsa:64342"/>
<dbReference type="MANE-Select" id="ENST00000304031.8">
    <property type="protein sequence ID" value="ENSP00000305193.3"/>
    <property type="RefSeq nucleotide sequence ID" value="NM_022460.4"/>
    <property type="RefSeq protein sequence ID" value="NP_071905.3"/>
</dbReference>
<dbReference type="UCSC" id="uc002rdw.2">
    <property type="organism name" value="human"/>
</dbReference>
<dbReference type="AGR" id="HGNC:24979"/>
<dbReference type="CTD" id="64342"/>
<dbReference type="DisGeNET" id="64342"/>
<dbReference type="GeneCards" id="HS1BP3"/>
<dbReference type="HGNC" id="HGNC:24979">
    <property type="gene designation" value="HS1BP3"/>
</dbReference>
<dbReference type="HPA" id="ENSG00000118960">
    <property type="expression patterns" value="Low tissue specificity"/>
</dbReference>
<dbReference type="MIM" id="609359">
    <property type="type" value="gene"/>
</dbReference>
<dbReference type="neXtProt" id="NX_Q53T59"/>
<dbReference type="OpenTargets" id="ENSG00000118960"/>
<dbReference type="PharmGKB" id="PA162391602"/>
<dbReference type="VEuPathDB" id="HostDB:ENSG00000118960"/>
<dbReference type="eggNOG" id="ENOG502QSUW">
    <property type="taxonomic scope" value="Eukaryota"/>
</dbReference>
<dbReference type="GeneTree" id="ENSGT00390000013092"/>
<dbReference type="HOGENOM" id="CLU_057345_1_0_1"/>
<dbReference type="InParanoid" id="Q53T59"/>
<dbReference type="OMA" id="NRIQTMN"/>
<dbReference type="OrthoDB" id="10254720at2759"/>
<dbReference type="PAN-GO" id="Q53T59">
    <property type="GO annotations" value="0 GO annotations based on evolutionary models"/>
</dbReference>
<dbReference type="PhylomeDB" id="Q53T59"/>
<dbReference type="TreeFam" id="TF335484"/>
<dbReference type="PathwayCommons" id="Q53T59"/>
<dbReference type="SignaLink" id="Q53T59"/>
<dbReference type="BioGRID-ORCS" id="64342">
    <property type="hits" value="12 hits in 1153 CRISPR screens"/>
</dbReference>
<dbReference type="ChiTaRS" id="HS1BP3">
    <property type="organism name" value="human"/>
</dbReference>
<dbReference type="GenomeRNAi" id="64342"/>
<dbReference type="Pharos" id="Q53T59">
    <property type="development level" value="Tbio"/>
</dbReference>
<dbReference type="PRO" id="PR:Q53T59"/>
<dbReference type="Proteomes" id="UP000005640">
    <property type="component" value="Chromosome 2"/>
</dbReference>
<dbReference type="RNAct" id="Q53T59">
    <property type="molecule type" value="protein"/>
</dbReference>
<dbReference type="Bgee" id="ENSG00000118960">
    <property type="expression patterns" value="Expressed in lower esophagus muscularis layer and 166 other cell types or tissues"/>
</dbReference>
<dbReference type="ExpressionAtlas" id="Q53T59">
    <property type="expression patterns" value="baseline and differential"/>
</dbReference>
<dbReference type="GO" id="GO:0005783">
    <property type="term" value="C:endoplasmic reticulum"/>
    <property type="evidence" value="ECO:0000314"/>
    <property type="project" value="ParkinsonsUK-UCL"/>
</dbReference>
<dbReference type="GO" id="GO:0005739">
    <property type="term" value="C:mitochondrion"/>
    <property type="evidence" value="ECO:0000314"/>
    <property type="project" value="ParkinsonsUK-UCL"/>
</dbReference>
<dbReference type="GO" id="GO:0035091">
    <property type="term" value="F:phosphatidylinositol binding"/>
    <property type="evidence" value="ECO:0007669"/>
    <property type="project" value="InterPro"/>
</dbReference>
<dbReference type="GO" id="GO:0042981">
    <property type="term" value="P:regulation of apoptotic process"/>
    <property type="evidence" value="ECO:0000315"/>
    <property type="project" value="ParkinsonsUK-UCL"/>
</dbReference>
<dbReference type="CDD" id="cd06868">
    <property type="entry name" value="PX_HS1BP3"/>
    <property type="match status" value="1"/>
</dbReference>
<dbReference type="FunFam" id="3.30.1520.10:FF:000036">
    <property type="entry name" value="HCLS1 binding protein 3"/>
    <property type="match status" value="1"/>
</dbReference>
<dbReference type="Gene3D" id="3.30.1520.10">
    <property type="entry name" value="Phox-like domain"/>
    <property type="match status" value="1"/>
</dbReference>
<dbReference type="InterPro" id="IPR039701">
    <property type="entry name" value="HS1BP3"/>
</dbReference>
<dbReference type="InterPro" id="IPR037901">
    <property type="entry name" value="HS1BP3_PX"/>
</dbReference>
<dbReference type="InterPro" id="IPR001683">
    <property type="entry name" value="PX_dom"/>
</dbReference>
<dbReference type="InterPro" id="IPR036871">
    <property type="entry name" value="PX_dom_sf"/>
</dbReference>
<dbReference type="PANTHER" id="PTHR14431">
    <property type="entry name" value="HCLS1-BINDING PROTEIN 3"/>
    <property type="match status" value="1"/>
</dbReference>
<dbReference type="PANTHER" id="PTHR14431:SF1">
    <property type="entry name" value="HCLS1-BINDING PROTEIN 3"/>
    <property type="match status" value="1"/>
</dbReference>
<dbReference type="Pfam" id="PF00787">
    <property type="entry name" value="PX"/>
    <property type="match status" value="1"/>
</dbReference>
<dbReference type="SMART" id="SM00312">
    <property type="entry name" value="PX"/>
    <property type="match status" value="1"/>
</dbReference>
<dbReference type="SUPFAM" id="SSF64268">
    <property type="entry name" value="PX domain"/>
    <property type="match status" value="1"/>
</dbReference>
<dbReference type="PROSITE" id="PS50195">
    <property type="entry name" value="PX"/>
    <property type="match status" value="1"/>
</dbReference>